<proteinExistence type="inferred from homology"/>
<sequence>MVTIRADEISNIIRERIEQYNREVTIVNTGTVLQVGDGIARIYGLDEVMAGELVEFEEGTIGIALNLESNNVGVVLMGDGLMIQEGSSVKATGKIAQIPVSEAYLGRVINALANPIDGRGKISASESRLIESPAPGIISRRSVYEPLQTGLIAIDSMIPIGRGQRELIIGDRQTGKTAVATDTILNQQGQNVICVYVAIGQKASSVAQVVTSLQERGAMEYTIVVAETADSPATLQYLAPYTGAALAEYFMYREQHTLIIYDDLSKQAQAYRQMSLLLRRPPGREAYPGDVFYLHSRLLERAAKLSSQLGEGSMTALPIVETQSGDVSAYIPTNVISITDGQIFLSADLFNAGIRPAINVGISVSRVGSAAQIKAMKQVAGKLKLELAQFAELEAFSQFSSDLDKATQNQLARGQRLRELLKQSQSAPLTVEEQIMTIYTGTNGYLDGLEIGQVRKFLVQLRTYLKTNKPQFQEIISSTKTLTAEAESFLKEGIQEQLERFLLLEKL</sequence>
<dbReference type="EC" id="7.1.2.2" evidence="2"/>
<dbReference type="EMBL" id="AP009373">
    <property type="protein sequence ID" value="BAF50359.1"/>
    <property type="molecule type" value="Genomic_DNA"/>
</dbReference>
<dbReference type="RefSeq" id="YP_001123535.1">
    <property type="nucleotide sequence ID" value="NC_009272.1"/>
</dbReference>
<dbReference type="SMR" id="A4QL04"/>
<dbReference type="GeneID" id="4964800"/>
<dbReference type="GO" id="GO:0009535">
    <property type="term" value="C:chloroplast thylakoid membrane"/>
    <property type="evidence" value="ECO:0007669"/>
    <property type="project" value="UniProtKB-SubCell"/>
</dbReference>
<dbReference type="GO" id="GO:0045259">
    <property type="term" value="C:proton-transporting ATP synthase complex"/>
    <property type="evidence" value="ECO:0007669"/>
    <property type="project" value="UniProtKB-KW"/>
</dbReference>
<dbReference type="GO" id="GO:0043531">
    <property type="term" value="F:ADP binding"/>
    <property type="evidence" value="ECO:0007669"/>
    <property type="project" value="TreeGrafter"/>
</dbReference>
<dbReference type="GO" id="GO:0005524">
    <property type="term" value="F:ATP binding"/>
    <property type="evidence" value="ECO:0007669"/>
    <property type="project" value="UniProtKB-UniRule"/>
</dbReference>
<dbReference type="GO" id="GO:0046933">
    <property type="term" value="F:proton-transporting ATP synthase activity, rotational mechanism"/>
    <property type="evidence" value="ECO:0007669"/>
    <property type="project" value="UniProtKB-UniRule"/>
</dbReference>
<dbReference type="CDD" id="cd18113">
    <property type="entry name" value="ATP-synt_F1_alpha_C"/>
    <property type="match status" value="1"/>
</dbReference>
<dbReference type="CDD" id="cd18116">
    <property type="entry name" value="ATP-synt_F1_alpha_N"/>
    <property type="match status" value="1"/>
</dbReference>
<dbReference type="CDD" id="cd01132">
    <property type="entry name" value="F1-ATPase_alpha_CD"/>
    <property type="match status" value="1"/>
</dbReference>
<dbReference type="FunFam" id="1.20.150.20:FF:000001">
    <property type="entry name" value="ATP synthase subunit alpha"/>
    <property type="match status" value="1"/>
</dbReference>
<dbReference type="FunFam" id="2.40.30.20:FF:000001">
    <property type="entry name" value="ATP synthase subunit alpha"/>
    <property type="match status" value="1"/>
</dbReference>
<dbReference type="FunFam" id="3.40.50.300:FF:000002">
    <property type="entry name" value="ATP synthase subunit alpha"/>
    <property type="match status" value="1"/>
</dbReference>
<dbReference type="Gene3D" id="2.40.30.20">
    <property type="match status" value="1"/>
</dbReference>
<dbReference type="Gene3D" id="1.20.150.20">
    <property type="entry name" value="ATP synthase alpha/beta chain, C-terminal domain"/>
    <property type="match status" value="1"/>
</dbReference>
<dbReference type="Gene3D" id="3.40.50.300">
    <property type="entry name" value="P-loop containing nucleotide triphosphate hydrolases"/>
    <property type="match status" value="1"/>
</dbReference>
<dbReference type="HAMAP" id="MF_01346">
    <property type="entry name" value="ATP_synth_alpha_bact"/>
    <property type="match status" value="1"/>
</dbReference>
<dbReference type="InterPro" id="IPR023366">
    <property type="entry name" value="ATP_synth_asu-like_sf"/>
</dbReference>
<dbReference type="InterPro" id="IPR000793">
    <property type="entry name" value="ATP_synth_asu_C"/>
</dbReference>
<dbReference type="InterPro" id="IPR038376">
    <property type="entry name" value="ATP_synth_asu_C_sf"/>
</dbReference>
<dbReference type="InterPro" id="IPR033732">
    <property type="entry name" value="ATP_synth_F1_a_nt-bd_dom"/>
</dbReference>
<dbReference type="InterPro" id="IPR005294">
    <property type="entry name" value="ATP_synth_F1_asu"/>
</dbReference>
<dbReference type="InterPro" id="IPR020003">
    <property type="entry name" value="ATPase_a/bsu_AS"/>
</dbReference>
<dbReference type="InterPro" id="IPR004100">
    <property type="entry name" value="ATPase_F1/V1/A1_a/bsu_N"/>
</dbReference>
<dbReference type="InterPro" id="IPR036121">
    <property type="entry name" value="ATPase_F1/V1/A1_a/bsu_N_sf"/>
</dbReference>
<dbReference type="InterPro" id="IPR000194">
    <property type="entry name" value="ATPase_F1/V1/A1_a/bsu_nucl-bd"/>
</dbReference>
<dbReference type="InterPro" id="IPR027417">
    <property type="entry name" value="P-loop_NTPase"/>
</dbReference>
<dbReference type="NCBIfam" id="TIGR00962">
    <property type="entry name" value="atpA"/>
    <property type="match status" value="1"/>
</dbReference>
<dbReference type="NCBIfam" id="NF009884">
    <property type="entry name" value="PRK13343.1"/>
    <property type="match status" value="1"/>
</dbReference>
<dbReference type="PANTHER" id="PTHR48082">
    <property type="entry name" value="ATP SYNTHASE SUBUNIT ALPHA, MITOCHONDRIAL"/>
    <property type="match status" value="1"/>
</dbReference>
<dbReference type="PANTHER" id="PTHR48082:SF2">
    <property type="entry name" value="ATP SYNTHASE SUBUNIT ALPHA, MITOCHONDRIAL"/>
    <property type="match status" value="1"/>
</dbReference>
<dbReference type="Pfam" id="PF00006">
    <property type="entry name" value="ATP-synt_ab"/>
    <property type="match status" value="1"/>
</dbReference>
<dbReference type="Pfam" id="PF00306">
    <property type="entry name" value="ATP-synt_ab_C"/>
    <property type="match status" value="1"/>
</dbReference>
<dbReference type="Pfam" id="PF02874">
    <property type="entry name" value="ATP-synt_ab_N"/>
    <property type="match status" value="1"/>
</dbReference>
<dbReference type="PIRSF" id="PIRSF039088">
    <property type="entry name" value="F_ATPase_subunit_alpha"/>
    <property type="match status" value="1"/>
</dbReference>
<dbReference type="SUPFAM" id="SSF47917">
    <property type="entry name" value="C-terminal domain of alpha and beta subunits of F1 ATP synthase"/>
    <property type="match status" value="1"/>
</dbReference>
<dbReference type="SUPFAM" id="SSF50615">
    <property type="entry name" value="N-terminal domain of alpha and beta subunits of F1 ATP synthase"/>
    <property type="match status" value="1"/>
</dbReference>
<dbReference type="SUPFAM" id="SSF52540">
    <property type="entry name" value="P-loop containing nucleoside triphosphate hydrolases"/>
    <property type="match status" value="1"/>
</dbReference>
<dbReference type="PROSITE" id="PS00152">
    <property type="entry name" value="ATPASE_ALPHA_BETA"/>
    <property type="match status" value="1"/>
</dbReference>
<comment type="function">
    <text evidence="2">Produces ATP from ADP in the presence of a proton gradient across the membrane. The alpha chain is a regulatory subunit.</text>
</comment>
<comment type="catalytic activity">
    <reaction evidence="2">
        <text>ATP + H2O + 4 H(+)(in) = ADP + phosphate + 5 H(+)(out)</text>
        <dbReference type="Rhea" id="RHEA:57720"/>
        <dbReference type="ChEBI" id="CHEBI:15377"/>
        <dbReference type="ChEBI" id="CHEBI:15378"/>
        <dbReference type="ChEBI" id="CHEBI:30616"/>
        <dbReference type="ChEBI" id="CHEBI:43474"/>
        <dbReference type="ChEBI" id="CHEBI:456216"/>
        <dbReference type="EC" id="7.1.2.2"/>
    </reaction>
</comment>
<comment type="subunit">
    <text evidence="2">F-type ATPases have 2 components, CF(1) - the catalytic core - and CF(0) - the membrane proton channel. CF(1) has five subunits: alpha(3), beta(3), gamma(1), delta(1), epsilon(1). CF(0) has four main subunits: a, b, b' and c.</text>
</comment>
<comment type="subcellular location">
    <subcellularLocation>
        <location evidence="2">Plastid</location>
        <location evidence="2">Chloroplast thylakoid membrane</location>
        <topology evidence="2">Peripheral membrane protein</topology>
    </subcellularLocation>
</comment>
<comment type="similarity">
    <text evidence="2">Belongs to the ATPase alpha/beta chains family.</text>
</comment>
<evidence type="ECO:0000250" key="1">
    <source>
        <dbReference type="UniProtKB" id="P56757"/>
    </source>
</evidence>
<evidence type="ECO:0000255" key="2">
    <source>
        <dbReference type="HAMAP-Rule" id="MF_01346"/>
    </source>
</evidence>
<gene>
    <name evidence="2" type="primary">atpA</name>
</gene>
<geneLocation type="chloroplast"/>
<feature type="chain" id="PRO_0000339086" description="ATP synthase subunit alpha, chloroplastic">
    <location>
        <begin position="1"/>
        <end position="507"/>
    </location>
</feature>
<feature type="binding site" evidence="2">
    <location>
        <begin position="170"/>
        <end position="177"/>
    </location>
    <ligand>
        <name>ATP</name>
        <dbReference type="ChEBI" id="CHEBI:30616"/>
    </ligand>
</feature>
<feature type="site" description="Required for activity" evidence="2">
    <location>
        <position position="363"/>
    </location>
</feature>
<feature type="modified residue" description="Phosphothreonine" evidence="1">
    <location>
        <position position="257"/>
    </location>
</feature>
<protein>
    <recommendedName>
        <fullName evidence="2">ATP synthase subunit alpha, chloroplastic</fullName>
        <ecNumber evidence="2">7.1.2.2</ecNumber>
    </recommendedName>
    <alternativeName>
        <fullName evidence="2">ATP synthase F1 sector subunit alpha</fullName>
    </alternativeName>
    <alternativeName>
        <fullName evidence="2">F-ATPase subunit alpha</fullName>
    </alternativeName>
</protein>
<keyword id="KW-0066">ATP synthesis</keyword>
<keyword id="KW-0067">ATP-binding</keyword>
<keyword id="KW-0139">CF(1)</keyword>
<keyword id="KW-0150">Chloroplast</keyword>
<keyword id="KW-0375">Hydrogen ion transport</keyword>
<keyword id="KW-0406">Ion transport</keyword>
<keyword id="KW-0472">Membrane</keyword>
<keyword id="KW-0547">Nucleotide-binding</keyword>
<keyword id="KW-0597">Phosphoprotein</keyword>
<keyword id="KW-0934">Plastid</keyword>
<keyword id="KW-0793">Thylakoid</keyword>
<keyword id="KW-1278">Translocase</keyword>
<keyword id="KW-0813">Transport</keyword>
<name>ATPA_DRANE</name>
<reference key="1">
    <citation type="submission" date="2007-03" db="EMBL/GenBank/DDBJ databases">
        <title>Sequencing analysis of Draba nemoroza chloroplast DNA.</title>
        <authorList>
            <person name="Hosouchi T."/>
            <person name="Tsuruoka H."/>
            <person name="Kotani H."/>
        </authorList>
    </citation>
    <scope>NUCLEOTIDE SEQUENCE [LARGE SCALE GENOMIC DNA]</scope>
</reference>
<accession>A4QL04</accession>
<organism>
    <name type="scientific">Draba nemorosa</name>
    <name type="common">Woodland whitlowgrass</name>
    <dbReference type="NCBI Taxonomy" id="171822"/>
    <lineage>
        <taxon>Eukaryota</taxon>
        <taxon>Viridiplantae</taxon>
        <taxon>Streptophyta</taxon>
        <taxon>Embryophyta</taxon>
        <taxon>Tracheophyta</taxon>
        <taxon>Spermatophyta</taxon>
        <taxon>Magnoliopsida</taxon>
        <taxon>eudicotyledons</taxon>
        <taxon>Gunneridae</taxon>
        <taxon>Pentapetalae</taxon>
        <taxon>rosids</taxon>
        <taxon>malvids</taxon>
        <taxon>Brassicales</taxon>
        <taxon>Brassicaceae</taxon>
        <taxon>Arabideae</taxon>
        <taxon>Draba</taxon>
    </lineage>
</organism>